<dbReference type="EC" id="2.3.1.-" evidence="4"/>
<dbReference type="EMBL" id="ACJE01000001">
    <property type="protein sequence ID" value="EHA28231.1"/>
    <property type="molecule type" value="Genomic_DNA"/>
</dbReference>
<dbReference type="SMR" id="G3XMB8"/>
<dbReference type="STRING" id="380704.G3XMB8"/>
<dbReference type="VEuPathDB" id="FungiDB:ASPNIDRAFT2_1114645"/>
<dbReference type="HOGENOM" id="CLU_026450_5_0_1"/>
<dbReference type="OrthoDB" id="58083at5052"/>
<dbReference type="Proteomes" id="UP000009038">
    <property type="component" value="Unassembled WGS sequence"/>
</dbReference>
<dbReference type="GO" id="GO:0016746">
    <property type="term" value="F:acyltransferase activity"/>
    <property type="evidence" value="ECO:0007669"/>
    <property type="project" value="UniProtKB-KW"/>
</dbReference>
<dbReference type="Gene3D" id="3.30.559.10">
    <property type="entry name" value="Chloramphenicol acetyltransferase-like domain"/>
    <property type="match status" value="2"/>
</dbReference>
<dbReference type="InterPro" id="IPR023213">
    <property type="entry name" value="CAT-like_dom_sf"/>
</dbReference>
<dbReference type="InterPro" id="IPR051283">
    <property type="entry name" value="Sec_Metabolite_Acyltrans"/>
</dbReference>
<dbReference type="InterPro" id="IPR054710">
    <property type="entry name" value="Tri101-like_N"/>
</dbReference>
<dbReference type="PANTHER" id="PTHR31896">
    <property type="entry name" value="FAMILY REGULATORY PROTEIN, PUTATIVE (AFU_ORTHOLOGUE AFUA_3G14730)-RELATED"/>
    <property type="match status" value="1"/>
</dbReference>
<dbReference type="PANTHER" id="PTHR31896:SF64">
    <property type="entry name" value="TRICHOTHECENE 3-O-ACETYLTRANSFERASE"/>
    <property type="match status" value="1"/>
</dbReference>
<dbReference type="Pfam" id="PF22664">
    <property type="entry name" value="TRI-like_N"/>
    <property type="match status" value="1"/>
</dbReference>
<organism>
    <name type="scientific">Aspergillus niger (strain ATCC 1015 / CBS 113.46 / FGSC A1144 / LSHB Ac4 / NCTC 3858a / NRRL 328 / USDA 3528.7)</name>
    <dbReference type="NCBI Taxonomy" id="380704"/>
    <lineage>
        <taxon>Eukaryota</taxon>
        <taxon>Fungi</taxon>
        <taxon>Dikarya</taxon>
        <taxon>Ascomycota</taxon>
        <taxon>Pezizomycotina</taxon>
        <taxon>Eurotiomycetes</taxon>
        <taxon>Eurotiomycetidae</taxon>
        <taxon>Eurotiales</taxon>
        <taxon>Aspergillaceae</taxon>
        <taxon>Aspergillus</taxon>
        <taxon>Aspergillus subgen. Circumdati</taxon>
    </lineage>
</organism>
<proteinExistence type="evidence at transcript level"/>
<feature type="chain" id="PRO_0000437611" description="O-acetyltransferase azaD">
    <location>
        <begin position="1"/>
        <end position="461"/>
    </location>
</feature>
<sequence>MATNGFRPEYEDLGRYEDILGQLPMLQVYSHIMLPFAMPEGLSQDTIIADLEAAVRQIRAHVPWMAGKVVNVGKGPDNSGRYIVVPCPPPDPLIVVRDVTHAFPPYKEIQRLKAPNSMLDSRLLAPTNAFPQRFEDSEEDPFRVIRLQASFVDGGVFLDFVTQHNMTDAGGLFGFARLVAMAMRGEQFSDSLLEQVNRDRRNIIPLLTPDEPMLDHSHHIRPPITDAQPVVRPDPARWHFLRFTAAKLAELKDLASQTMTPDPEVPYITTDDAVSAFCWKKYITVRHRRRNTPDARSRFSRAMDGRKVLGIPAEYMGDLVHNVTTWLTFRELVDLPLGEIARHMRRELNRANTAYHVRSFATFIAQEPDKSTIAYGGRFNPDTDVGSSSVLRVDLFPVFGKLGRPDFIRRPNFPGIPFPSLLYFFPQNPQGECDSLTCLTDADMEALNQDSEWTSMVEYIG</sequence>
<comment type="function">
    <text evidence="1">O-acetyltransferase; part of the gene cluster that mediates the biosynthesis of azaphilones, a class of fungal metabolites characterized by a highly oxygenated pyrano-quinone bicyclic core and exhibiting a broad range of bioactivities (PubMed:22921072). In the first step, the non-reducing polyketide synthase azaA forms the hexaketide precursor from successive condensations of five malonyl-CoA units, presumably with a simple acetyl-CoA starter unit (PubMed:22921072). The reactive polyketide chain then undergoes a PT-mediated C2-C7 cyclization to afford the aromatic ring and is eventually released as an aldehyde through the R-domain (PubMed:22921072). The putative ketoreductase azaE is proposed to catalyze the reduction of the terminal ketone resulting in the early culture product FK17-P2a (PubMed:22921072). The monooxygenase azaH was demonstrated to be the only enzyme required to convert FK17-P2a to azanigerone E (PubMed:22921072). AzaH first hydroxylates the benzaldehyde intermediate FK17-P2a at C4, which triggers the formation of the pyran-ring to afford azanigerone E (PubMed:22921072). In parallel, the 2,4-dimethylhexanoyl chain is synthesized by the HR-PKS azaB and is proposed to be transferred to the C4-hydroxyl of azanigerone E by the acyltransferase azaD directly from the ACP domain of azaB (PubMed:22921072). Alternatively, the 2,4-dimethyl-hexanoyl chain may be offloaded from the HR-PKS as a carboxylic acid and converted to an acyl-CoA by azaF (PubMed:22921072). The resulting acyl-CoA molecule could then be taken up as a substrate by AzaD to form azanigerone B (PubMed:22921072). To yield the carboxylic acid substituent in azanigerone A, the hydroxypropyl side chain of azanigerone B would need to undergo a C-C oxidative cleavage catalyzed by cytochrome P450 AzaI (PubMed:22921072). AzaI is proposed to act on a vicinal diol that leads to a C-C bond scission either through an alkoxyradical intermediate or a peroxy complex (PubMed:22921072). In the biosynthesis of azanigerone A, azanigerone B first undergoes hydroxylation at C10, possibly catalyzed by one of the two FAD-dependent monooxygenases encoded in the cluster, azaG or azaL, resulting in the vicinal diol azanigerone C (PubMed:22921072). Oxidative cleavage of azanigerone C by azaI would yield the corresponding aldehyde derivative of azanigerone A (PubMed:22921072). Finally, the dehydrogenase azaJ is proposed to convert the aldehyde functional group into the carboxylic acid, completing the conversion from azanigerone B to azanigerone A (PubMed:22921072). Alternatively, the oxidation of aldehyde to carboxylic acid may be catalyzed by the same P450 enzyme azaI via consecutive oxidation or by endogenous alcohol dehydrogenase (PubMed:22921072).</text>
</comment>
<comment type="pathway">
    <text evidence="1">Secondary metabolite biosynthesis.</text>
</comment>
<comment type="induction">
    <text evidence="1">Expression is under the control of the azaphilone cluster-specific transcription factor azaR (PubMed:22921072).</text>
</comment>
<comment type="similarity">
    <text evidence="3">Belongs to the trichothecene 3-O-acetyltransferase family.</text>
</comment>
<keyword id="KW-0012">Acyltransferase</keyword>
<keyword id="KW-0808">Transferase</keyword>
<accession>G3XMB8</accession>
<gene>
    <name evidence="2" type="primary">azaD</name>
    <name type="ORF">ASPNIDRAFT_189181</name>
</gene>
<protein>
    <recommendedName>
        <fullName evidence="2">O-acetyltransferase azaD</fullName>
        <ecNumber evidence="4">2.3.1.-</ecNumber>
    </recommendedName>
    <alternativeName>
        <fullName evidence="2">Azaphilone biosynthesis cluster protein azaD</fullName>
    </alternativeName>
</protein>
<evidence type="ECO:0000269" key="1">
    <source>
    </source>
</evidence>
<evidence type="ECO:0000303" key="2">
    <source>
    </source>
</evidence>
<evidence type="ECO:0000305" key="3"/>
<evidence type="ECO:0000305" key="4">
    <source>
    </source>
</evidence>
<reference key="1">
    <citation type="journal article" date="2011" name="Genome Res.">
        <title>Comparative genomics of citric-acid-producing Aspergillus niger ATCC 1015 versus enzyme-producing CBS 513.88.</title>
        <authorList>
            <person name="Andersen M.R."/>
            <person name="Salazar M.P."/>
            <person name="Schaap P.J."/>
            <person name="van de Vondervoort P.J.I."/>
            <person name="Culley D."/>
            <person name="Thykaer J."/>
            <person name="Frisvad J.C."/>
            <person name="Nielsen K.F."/>
            <person name="Albang R."/>
            <person name="Albermann K."/>
            <person name="Berka R.M."/>
            <person name="Braus G.H."/>
            <person name="Braus-Stromeyer S.A."/>
            <person name="Corrochano L.M."/>
            <person name="Dai Z."/>
            <person name="van Dijck P.W.M."/>
            <person name="Hofmann G."/>
            <person name="Lasure L.L."/>
            <person name="Magnuson J.K."/>
            <person name="Menke H."/>
            <person name="Meijer M."/>
            <person name="Meijer S.L."/>
            <person name="Nielsen J.B."/>
            <person name="Nielsen M.L."/>
            <person name="van Ooyen A.J.J."/>
            <person name="Pel H.J."/>
            <person name="Poulsen L."/>
            <person name="Samson R.A."/>
            <person name="Stam H."/>
            <person name="Tsang A."/>
            <person name="van den Brink J.M."/>
            <person name="Atkins A."/>
            <person name="Aerts A."/>
            <person name="Shapiro H."/>
            <person name="Pangilinan J."/>
            <person name="Salamov A."/>
            <person name="Lou Y."/>
            <person name="Lindquist E."/>
            <person name="Lucas S."/>
            <person name="Grimwood J."/>
            <person name="Grigoriev I.V."/>
            <person name="Kubicek C.P."/>
            <person name="Martinez D."/>
            <person name="van Peij N.N.M.E."/>
            <person name="Roubos J.A."/>
            <person name="Nielsen J."/>
            <person name="Baker S.E."/>
        </authorList>
    </citation>
    <scope>NUCLEOTIDE SEQUENCE [LARGE SCALE GENOMIC DNA]</scope>
    <source>
        <strain>ATCC 1015 / CBS 113.46 / FGSC A1144 / LSHB Ac4 / NCTC 3858a / NRRL 328 / USDA 3528.7</strain>
    </source>
</reference>
<reference key="2">
    <citation type="journal article" date="2012" name="Chem. Biol.">
        <title>Characterization of a silent azaphilone gene cluster from Aspergillus niger ATCC 1015 reveals a hydroxylation-mediated pyran-ring formation.</title>
        <authorList>
            <person name="Zabala A.O."/>
            <person name="Xu W."/>
            <person name="Chooi Y.H."/>
            <person name="Tang Y."/>
        </authorList>
    </citation>
    <scope>FUNCTION</scope>
    <scope>INDUCTION</scope>
</reference>
<name>AZAD_ASPNA</name>